<accession>Q0I3N5</accession>
<feature type="chain" id="PRO_0000265529" description="Transcription antitermination protein NusB">
    <location>
        <begin position="1"/>
        <end position="144"/>
    </location>
</feature>
<sequence length="144" mass="16644">MTEKVKKLSPRRRARECAVQTLYSWAISKNAPEEIELNFIVDQDNEMKGVDMPYFRKLFRQTVDHVEIVDSIMAPYLDRDNVELDPIECAILRLAVYELKFELDVPYKVVINEAIEVAKVFGAEESHKYINGVLDKIAPALSRK</sequence>
<keyword id="KW-0694">RNA-binding</keyword>
<keyword id="KW-0804">Transcription</keyword>
<keyword id="KW-0889">Transcription antitermination</keyword>
<keyword id="KW-0805">Transcription regulation</keyword>
<name>NUSB_HISS1</name>
<organism>
    <name type="scientific">Histophilus somni (strain 129Pt)</name>
    <name type="common">Haemophilus somnus</name>
    <dbReference type="NCBI Taxonomy" id="205914"/>
    <lineage>
        <taxon>Bacteria</taxon>
        <taxon>Pseudomonadati</taxon>
        <taxon>Pseudomonadota</taxon>
        <taxon>Gammaproteobacteria</taxon>
        <taxon>Pasteurellales</taxon>
        <taxon>Pasteurellaceae</taxon>
        <taxon>Histophilus</taxon>
    </lineage>
</organism>
<evidence type="ECO:0000255" key="1">
    <source>
        <dbReference type="HAMAP-Rule" id="MF_00073"/>
    </source>
</evidence>
<dbReference type="EMBL" id="CP000436">
    <property type="protein sequence ID" value="ABI25106.1"/>
    <property type="molecule type" value="Genomic_DNA"/>
</dbReference>
<dbReference type="SMR" id="Q0I3N5"/>
<dbReference type="KEGG" id="hso:HS_0831"/>
<dbReference type="eggNOG" id="COG0781">
    <property type="taxonomic scope" value="Bacteria"/>
</dbReference>
<dbReference type="HOGENOM" id="CLU_087843_4_1_6"/>
<dbReference type="GO" id="GO:0005829">
    <property type="term" value="C:cytosol"/>
    <property type="evidence" value="ECO:0007669"/>
    <property type="project" value="TreeGrafter"/>
</dbReference>
<dbReference type="GO" id="GO:0003723">
    <property type="term" value="F:RNA binding"/>
    <property type="evidence" value="ECO:0007669"/>
    <property type="project" value="UniProtKB-UniRule"/>
</dbReference>
<dbReference type="GO" id="GO:0006353">
    <property type="term" value="P:DNA-templated transcription termination"/>
    <property type="evidence" value="ECO:0007669"/>
    <property type="project" value="UniProtKB-UniRule"/>
</dbReference>
<dbReference type="GO" id="GO:0031564">
    <property type="term" value="P:transcription antitermination"/>
    <property type="evidence" value="ECO:0007669"/>
    <property type="project" value="UniProtKB-KW"/>
</dbReference>
<dbReference type="CDD" id="cd00619">
    <property type="entry name" value="Terminator_NusB"/>
    <property type="match status" value="1"/>
</dbReference>
<dbReference type="FunFam" id="1.10.940.10:FF:000001">
    <property type="entry name" value="Transcription antitermination factor NusB"/>
    <property type="match status" value="1"/>
</dbReference>
<dbReference type="Gene3D" id="1.10.940.10">
    <property type="entry name" value="NusB-like"/>
    <property type="match status" value="1"/>
</dbReference>
<dbReference type="HAMAP" id="MF_00073">
    <property type="entry name" value="NusB"/>
    <property type="match status" value="1"/>
</dbReference>
<dbReference type="InterPro" id="IPR035926">
    <property type="entry name" value="NusB-like_sf"/>
</dbReference>
<dbReference type="InterPro" id="IPR011605">
    <property type="entry name" value="NusB_fam"/>
</dbReference>
<dbReference type="InterPro" id="IPR006027">
    <property type="entry name" value="NusB_RsmB_TIM44"/>
</dbReference>
<dbReference type="NCBIfam" id="TIGR01951">
    <property type="entry name" value="nusB"/>
    <property type="match status" value="1"/>
</dbReference>
<dbReference type="PANTHER" id="PTHR11078:SF3">
    <property type="entry name" value="ANTITERMINATION NUSB DOMAIN-CONTAINING PROTEIN"/>
    <property type="match status" value="1"/>
</dbReference>
<dbReference type="PANTHER" id="PTHR11078">
    <property type="entry name" value="N UTILIZATION SUBSTANCE PROTEIN B-RELATED"/>
    <property type="match status" value="1"/>
</dbReference>
<dbReference type="Pfam" id="PF01029">
    <property type="entry name" value="NusB"/>
    <property type="match status" value="1"/>
</dbReference>
<dbReference type="SUPFAM" id="SSF48013">
    <property type="entry name" value="NusB-like"/>
    <property type="match status" value="1"/>
</dbReference>
<comment type="function">
    <text evidence="1">Involved in transcription antitermination. Required for transcription of ribosomal RNA (rRNA) genes. Binds specifically to the boxA antiterminator sequence of the ribosomal RNA (rrn) operons.</text>
</comment>
<comment type="similarity">
    <text evidence="1">Belongs to the NusB family.</text>
</comment>
<gene>
    <name evidence="1" type="primary">nusB</name>
    <name type="ordered locus">HS_0831</name>
</gene>
<reference key="1">
    <citation type="journal article" date="2007" name="J. Bacteriol.">
        <title>Complete genome sequence of Haemophilus somnus (Histophilus somni) strain 129Pt and comparison to Haemophilus ducreyi 35000HP and Haemophilus influenzae Rd.</title>
        <authorList>
            <person name="Challacombe J.F."/>
            <person name="Duncan A.J."/>
            <person name="Brettin T.S."/>
            <person name="Bruce D."/>
            <person name="Chertkov O."/>
            <person name="Detter J.C."/>
            <person name="Han C.S."/>
            <person name="Misra M."/>
            <person name="Richardson P."/>
            <person name="Tapia R."/>
            <person name="Thayer N."/>
            <person name="Xie G."/>
            <person name="Inzana T.J."/>
        </authorList>
    </citation>
    <scope>NUCLEOTIDE SEQUENCE [LARGE SCALE GENOMIC DNA]</scope>
    <source>
        <strain>129Pt</strain>
    </source>
</reference>
<protein>
    <recommendedName>
        <fullName evidence="1">Transcription antitermination protein NusB</fullName>
    </recommendedName>
    <alternativeName>
        <fullName evidence="1">Antitermination factor NusB</fullName>
    </alternativeName>
</protein>
<proteinExistence type="inferred from homology"/>